<evidence type="ECO:0000255" key="1">
    <source>
        <dbReference type="HAMAP-Rule" id="MF_00124"/>
    </source>
</evidence>
<feature type="chain" id="PRO_0000175048" description="Thymidine kinase">
    <location>
        <begin position="1"/>
        <end position="209"/>
    </location>
</feature>
<feature type="active site" description="Proton acceptor" evidence="1">
    <location>
        <position position="89"/>
    </location>
</feature>
<feature type="binding site" evidence="1">
    <location>
        <begin position="9"/>
        <end position="16"/>
    </location>
    <ligand>
        <name>ATP</name>
        <dbReference type="ChEBI" id="CHEBI:30616"/>
    </ligand>
</feature>
<feature type="binding site" evidence="1">
    <location>
        <begin position="88"/>
        <end position="91"/>
    </location>
    <ligand>
        <name>ATP</name>
        <dbReference type="ChEBI" id="CHEBI:30616"/>
    </ligand>
</feature>
<protein>
    <recommendedName>
        <fullName evidence="1">Thymidine kinase</fullName>
        <ecNumber evidence="1">2.7.1.21</ecNumber>
    </recommendedName>
</protein>
<comment type="catalytic activity">
    <reaction evidence="1">
        <text>thymidine + ATP = dTMP + ADP + H(+)</text>
        <dbReference type="Rhea" id="RHEA:19129"/>
        <dbReference type="ChEBI" id="CHEBI:15378"/>
        <dbReference type="ChEBI" id="CHEBI:17748"/>
        <dbReference type="ChEBI" id="CHEBI:30616"/>
        <dbReference type="ChEBI" id="CHEBI:63528"/>
        <dbReference type="ChEBI" id="CHEBI:456216"/>
        <dbReference type="EC" id="2.7.1.21"/>
    </reaction>
</comment>
<comment type="subunit">
    <text evidence="1">Homotetramer.</text>
</comment>
<comment type="subcellular location">
    <subcellularLocation>
        <location evidence="1">Cytoplasm</location>
    </subcellularLocation>
</comment>
<comment type="similarity">
    <text evidence="1">Belongs to the thymidine kinase family.</text>
</comment>
<dbReference type="EC" id="2.7.1.21" evidence="1"/>
<dbReference type="EMBL" id="AE008923">
    <property type="protein sequence ID" value="AAM39117.1"/>
    <property type="molecule type" value="Genomic_DNA"/>
</dbReference>
<dbReference type="RefSeq" id="WP_005917020.1">
    <property type="nucleotide sequence ID" value="NC_003919.1"/>
</dbReference>
<dbReference type="SMR" id="Q8PEQ8"/>
<dbReference type="KEGG" id="xac:XAC4282"/>
<dbReference type="eggNOG" id="COG1435">
    <property type="taxonomic scope" value="Bacteria"/>
</dbReference>
<dbReference type="HOGENOM" id="CLU_064400_2_1_6"/>
<dbReference type="Proteomes" id="UP000000576">
    <property type="component" value="Chromosome"/>
</dbReference>
<dbReference type="GO" id="GO:0005829">
    <property type="term" value="C:cytosol"/>
    <property type="evidence" value="ECO:0007669"/>
    <property type="project" value="TreeGrafter"/>
</dbReference>
<dbReference type="GO" id="GO:0005524">
    <property type="term" value="F:ATP binding"/>
    <property type="evidence" value="ECO:0007669"/>
    <property type="project" value="UniProtKB-UniRule"/>
</dbReference>
<dbReference type="GO" id="GO:0004797">
    <property type="term" value="F:thymidine kinase activity"/>
    <property type="evidence" value="ECO:0007669"/>
    <property type="project" value="UniProtKB-UniRule"/>
</dbReference>
<dbReference type="GO" id="GO:0071897">
    <property type="term" value="P:DNA biosynthetic process"/>
    <property type="evidence" value="ECO:0007669"/>
    <property type="project" value="UniProtKB-KW"/>
</dbReference>
<dbReference type="GO" id="GO:0046104">
    <property type="term" value="P:thymidine metabolic process"/>
    <property type="evidence" value="ECO:0007669"/>
    <property type="project" value="TreeGrafter"/>
</dbReference>
<dbReference type="FunFam" id="3.40.50.300:FF:000323">
    <property type="entry name" value="Thymidine kinase"/>
    <property type="match status" value="1"/>
</dbReference>
<dbReference type="Gene3D" id="3.40.50.300">
    <property type="entry name" value="P-loop containing nucleotide triphosphate hydrolases"/>
    <property type="match status" value="1"/>
</dbReference>
<dbReference type="HAMAP" id="MF_00124">
    <property type="entry name" value="Thymidine_kinase"/>
    <property type="match status" value="1"/>
</dbReference>
<dbReference type="InterPro" id="IPR027417">
    <property type="entry name" value="P-loop_NTPase"/>
</dbReference>
<dbReference type="InterPro" id="IPR001267">
    <property type="entry name" value="Thymidine_kinase"/>
</dbReference>
<dbReference type="NCBIfam" id="NF003300">
    <property type="entry name" value="PRK04296.1-5"/>
    <property type="match status" value="1"/>
</dbReference>
<dbReference type="PANTHER" id="PTHR11441">
    <property type="entry name" value="THYMIDINE KINASE"/>
    <property type="match status" value="1"/>
</dbReference>
<dbReference type="PANTHER" id="PTHR11441:SF0">
    <property type="entry name" value="THYMIDINE KINASE, CYTOSOLIC"/>
    <property type="match status" value="1"/>
</dbReference>
<dbReference type="Pfam" id="PF00265">
    <property type="entry name" value="TK"/>
    <property type="match status" value="1"/>
</dbReference>
<dbReference type="PIRSF" id="PIRSF035805">
    <property type="entry name" value="TK_cell"/>
    <property type="match status" value="1"/>
</dbReference>
<dbReference type="SUPFAM" id="SSF57716">
    <property type="entry name" value="Glucocorticoid receptor-like (DNA-binding domain)"/>
    <property type="match status" value="1"/>
</dbReference>
<dbReference type="SUPFAM" id="SSF52540">
    <property type="entry name" value="P-loop containing nucleoside triphosphate hydrolases"/>
    <property type="match status" value="1"/>
</dbReference>
<organism>
    <name type="scientific">Xanthomonas axonopodis pv. citri (strain 306)</name>
    <dbReference type="NCBI Taxonomy" id="190486"/>
    <lineage>
        <taxon>Bacteria</taxon>
        <taxon>Pseudomonadati</taxon>
        <taxon>Pseudomonadota</taxon>
        <taxon>Gammaproteobacteria</taxon>
        <taxon>Lysobacterales</taxon>
        <taxon>Lysobacteraceae</taxon>
        <taxon>Xanthomonas</taxon>
    </lineage>
</organism>
<sequence length="209" mass="23480">MAKLYFYYSAMNAGKTTTLLQSAHNYRERGMRTLILTPKLDHRAGSGVVASRIGLRADGRIFERDTELQQLVERDIHNDGALHCVLVDEAQFLSRAQVWQLSEVVDRLRIPVLCYGLRTDFRGELFEGSQFLLAWADELEEIKTICHSGSKATMTVRVDAHGHAVQDGPQVEIGGNERYVSVSRAEFKKIMRGEGRIDPLQIALPLPVA</sequence>
<keyword id="KW-0067">ATP-binding</keyword>
<keyword id="KW-0963">Cytoplasm</keyword>
<keyword id="KW-0237">DNA synthesis</keyword>
<keyword id="KW-0418">Kinase</keyword>
<keyword id="KW-0547">Nucleotide-binding</keyword>
<keyword id="KW-0808">Transferase</keyword>
<reference key="1">
    <citation type="journal article" date="2002" name="Nature">
        <title>Comparison of the genomes of two Xanthomonas pathogens with differing host specificities.</title>
        <authorList>
            <person name="da Silva A.C.R."/>
            <person name="Ferro J.A."/>
            <person name="Reinach F.C."/>
            <person name="Farah C.S."/>
            <person name="Furlan L.R."/>
            <person name="Quaggio R.B."/>
            <person name="Monteiro-Vitorello C.B."/>
            <person name="Van Sluys M.A."/>
            <person name="Almeida N.F. Jr."/>
            <person name="Alves L.M.C."/>
            <person name="do Amaral A.M."/>
            <person name="Bertolini M.C."/>
            <person name="Camargo L.E.A."/>
            <person name="Camarotte G."/>
            <person name="Cannavan F."/>
            <person name="Cardozo J."/>
            <person name="Chambergo F."/>
            <person name="Ciapina L.P."/>
            <person name="Cicarelli R.M.B."/>
            <person name="Coutinho L.L."/>
            <person name="Cursino-Santos J.R."/>
            <person name="El-Dorry H."/>
            <person name="Faria J.B."/>
            <person name="Ferreira A.J.S."/>
            <person name="Ferreira R.C.C."/>
            <person name="Ferro M.I.T."/>
            <person name="Formighieri E.F."/>
            <person name="Franco M.C."/>
            <person name="Greggio C.C."/>
            <person name="Gruber A."/>
            <person name="Katsuyama A.M."/>
            <person name="Kishi L.T."/>
            <person name="Leite R.P."/>
            <person name="Lemos E.G.M."/>
            <person name="Lemos M.V.F."/>
            <person name="Locali E.C."/>
            <person name="Machado M.A."/>
            <person name="Madeira A.M.B.N."/>
            <person name="Martinez-Rossi N.M."/>
            <person name="Martins E.C."/>
            <person name="Meidanis J."/>
            <person name="Menck C.F.M."/>
            <person name="Miyaki C.Y."/>
            <person name="Moon D.H."/>
            <person name="Moreira L.M."/>
            <person name="Novo M.T.M."/>
            <person name="Okura V.K."/>
            <person name="Oliveira M.C."/>
            <person name="Oliveira V.R."/>
            <person name="Pereira H.A."/>
            <person name="Rossi A."/>
            <person name="Sena J.A.D."/>
            <person name="Silva C."/>
            <person name="de Souza R.F."/>
            <person name="Spinola L.A.F."/>
            <person name="Takita M.A."/>
            <person name="Tamura R.E."/>
            <person name="Teixeira E.C."/>
            <person name="Tezza R.I.D."/>
            <person name="Trindade dos Santos M."/>
            <person name="Truffi D."/>
            <person name="Tsai S.M."/>
            <person name="White F.F."/>
            <person name="Setubal J.C."/>
            <person name="Kitajima J.P."/>
        </authorList>
    </citation>
    <scope>NUCLEOTIDE SEQUENCE [LARGE SCALE GENOMIC DNA]</scope>
    <source>
        <strain>306</strain>
    </source>
</reference>
<accession>Q8PEQ8</accession>
<name>KITH_XANAC</name>
<proteinExistence type="inferred from homology"/>
<gene>
    <name evidence="1" type="primary">tdk</name>
    <name type="ordered locus">XAC4282</name>
</gene>